<reference key="1">
    <citation type="journal article" date="2010" name="Genome Biol. Evol.">
        <title>Continuing evolution of Burkholderia mallei through genome reduction and large-scale rearrangements.</title>
        <authorList>
            <person name="Losada L."/>
            <person name="Ronning C.M."/>
            <person name="DeShazer D."/>
            <person name="Woods D."/>
            <person name="Fedorova N."/>
            <person name="Kim H.S."/>
            <person name="Shabalina S.A."/>
            <person name="Pearson T.R."/>
            <person name="Brinkac L."/>
            <person name="Tan P."/>
            <person name="Nandi T."/>
            <person name="Crabtree J."/>
            <person name="Badger J."/>
            <person name="Beckstrom-Sternberg S."/>
            <person name="Saqib M."/>
            <person name="Schutzer S.E."/>
            <person name="Keim P."/>
            <person name="Nierman W.C."/>
        </authorList>
    </citation>
    <scope>NUCLEOTIDE SEQUENCE [LARGE SCALE GENOMIC DNA]</scope>
    <source>
        <strain>1106a</strain>
    </source>
</reference>
<sequence>MIETDKLAAERIIAATPASSHEEAFERALRPRQLDEYVGQEKVRDQLEIFIEAAKRRSEALDHVLLFGPPGLGKTTLAHIIAREMGVNLRQTSGPVLERAGDLAALLTNLEANDVLFIDEIHRLSPVVEEILYPALEDYQIDIMIGEGPAARSVKLDLQPFTLVGATTRAGMLTNPLRDRFGIVARLEFYDAEQLSRIVRRSAALLNAQIDPAGALEIAKRSRGTPRIANRLLRRVRDYAEVKADGNITAAVADAALAMLDVDPVGFDLMDRKLLEAILHKFDGGPVGVDNLAAAIGEERDTIEDVLEPYLIQQGFLQRTPRGRVATLLTYRHFGLSAPDAANPVRNLWDTPDAEC</sequence>
<protein>
    <recommendedName>
        <fullName evidence="1">Holliday junction branch migration complex subunit RuvB</fullName>
        <ecNumber evidence="1">3.6.4.-</ecNumber>
    </recommendedName>
</protein>
<evidence type="ECO:0000255" key="1">
    <source>
        <dbReference type="HAMAP-Rule" id="MF_00016"/>
    </source>
</evidence>
<comment type="function">
    <text evidence="1">The RuvA-RuvB-RuvC complex processes Holliday junction (HJ) DNA during genetic recombination and DNA repair, while the RuvA-RuvB complex plays an important role in the rescue of blocked DNA replication forks via replication fork reversal (RFR). RuvA specifically binds to HJ cruciform DNA, conferring on it an open structure. The RuvB hexamer acts as an ATP-dependent pump, pulling dsDNA into and through the RuvAB complex. RuvB forms 2 homohexamers on either side of HJ DNA bound by 1 or 2 RuvA tetramers; 4 subunits per hexamer contact DNA at a time. Coordinated motions by a converter formed by DNA-disengaged RuvB subunits stimulates ATP hydrolysis and nucleotide exchange. Immobilization of the converter enables RuvB to convert the ATP-contained energy into a lever motion, pulling 2 nucleotides of DNA out of the RuvA tetramer per ATP hydrolyzed, thus driving DNA branch migration. The RuvB motors rotate together with the DNA substrate, which together with the progressing nucleotide cycle form the mechanistic basis for DNA recombination by continuous HJ branch migration. Branch migration allows RuvC to scan DNA until it finds its consensus sequence, where it cleaves and resolves cruciform DNA.</text>
</comment>
<comment type="catalytic activity">
    <reaction evidence="1">
        <text>ATP + H2O = ADP + phosphate + H(+)</text>
        <dbReference type="Rhea" id="RHEA:13065"/>
        <dbReference type="ChEBI" id="CHEBI:15377"/>
        <dbReference type="ChEBI" id="CHEBI:15378"/>
        <dbReference type="ChEBI" id="CHEBI:30616"/>
        <dbReference type="ChEBI" id="CHEBI:43474"/>
        <dbReference type="ChEBI" id="CHEBI:456216"/>
    </reaction>
</comment>
<comment type="subunit">
    <text evidence="1">Homohexamer. Forms an RuvA(8)-RuvB(12)-Holliday junction (HJ) complex. HJ DNA is sandwiched between 2 RuvA tetramers; dsDNA enters through RuvA and exits via RuvB. An RuvB hexamer assembles on each DNA strand where it exits the tetramer. Each RuvB hexamer is contacted by two RuvA subunits (via domain III) on 2 adjacent RuvB subunits; this complex drives branch migration. In the full resolvosome a probable DNA-RuvA(4)-RuvB(12)-RuvC(2) complex forms which resolves the HJ.</text>
</comment>
<comment type="subcellular location">
    <subcellularLocation>
        <location evidence="1">Cytoplasm</location>
    </subcellularLocation>
</comment>
<comment type="domain">
    <text evidence="1">Has 3 domains, the large (RuvB-L) and small ATPase (RuvB-S) domains and the C-terminal head (RuvB-H) domain. The head domain binds DNA, while the ATPase domains jointly bind ATP, ADP or are empty depending on the state of the subunit in the translocation cycle. During a single DNA translocation step the structure of each domain remains the same, but their relative positions change.</text>
</comment>
<comment type="similarity">
    <text evidence="1">Belongs to the RuvB family.</text>
</comment>
<accession>A3NZ67</accession>
<gene>
    <name evidence="1" type="primary">ruvB</name>
    <name type="ordered locus">BURPS1106A_3401</name>
</gene>
<feature type="chain" id="PRO_1000001374" description="Holliday junction branch migration complex subunit RuvB">
    <location>
        <begin position="1"/>
        <end position="356"/>
    </location>
</feature>
<feature type="region of interest" description="Large ATPase domain (RuvB-L)" evidence="1">
    <location>
        <begin position="4"/>
        <end position="190"/>
    </location>
</feature>
<feature type="region of interest" description="Small ATPAse domain (RuvB-S)" evidence="1">
    <location>
        <begin position="191"/>
        <end position="261"/>
    </location>
</feature>
<feature type="region of interest" description="Head domain (RuvB-H)" evidence="1">
    <location>
        <begin position="264"/>
        <end position="356"/>
    </location>
</feature>
<feature type="binding site" evidence="1">
    <location>
        <position position="29"/>
    </location>
    <ligand>
        <name>ATP</name>
        <dbReference type="ChEBI" id="CHEBI:30616"/>
    </ligand>
</feature>
<feature type="binding site" evidence="1">
    <location>
        <position position="30"/>
    </location>
    <ligand>
        <name>ATP</name>
        <dbReference type="ChEBI" id="CHEBI:30616"/>
    </ligand>
</feature>
<feature type="binding site" evidence="1">
    <location>
        <position position="71"/>
    </location>
    <ligand>
        <name>ATP</name>
        <dbReference type="ChEBI" id="CHEBI:30616"/>
    </ligand>
</feature>
<feature type="binding site" evidence="1">
    <location>
        <position position="74"/>
    </location>
    <ligand>
        <name>ATP</name>
        <dbReference type="ChEBI" id="CHEBI:30616"/>
    </ligand>
</feature>
<feature type="binding site" evidence="1">
    <location>
        <position position="75"/>
    </location>
    <ligand>
        <name>ATP</name>
        <dbReference type="ChEBI" id="CHEBI:30616"/>
    </ligand>
</feature>
<feature type="binding site" evidence="1">
    <location>
        <position position="75"/>
    </location>
    <ligand>
        <name>Mg(2+)</name>
        <dbReference type="ChEBI" id="CHEBI:18420"/>
    </ligand>
</feature>
<feature type="binding site" evidence="1">
    <location>
        <position position="76"/>
    </location>
    <ligand>
        <name>ATP</name>
        <dbReference type="ChEBI" id="CHEBI:30616"/>
    </ligand>
</feature>
<feature type="binding site" evidence="1">
    <location>
        <begin position="137"/>
        <end position="139"/>
    </location>
    <ligand>
        <name>ATP</name>
        <dbReference type="ChEBI" id="CHEBI:30616"/>
    </ligand>
</feature>
<feature type="binding site" evidence="1">
    <location>
        <position position="180"/>
    </location>
    <ligand>
        <name>ATP</name>
        <dbReference type="ChEBI" id="CHEBI:30616"/>
    </ligand>
</feature>
<feature type="binding site" evidence="1">
    <location>
        <position position="190"/>
    </location>
    <ligand>
        <name>ATP</name>
        <dbReference type="ChEBI" id="CHEBI:30616"/>
    </ligand>
</feature>
<feature type="binding site" evidence="1">
    <location>
        <position position="227"/>
    </location>
    <ligand>
        <name>ATP</name>
        <dbReference type="ChEBI" id="CHEBI:30616"/>
    </ligand>
</feature>
<feature type="binding site" evidence="1">
    <location>
        <position position="300"/>
    </location>
    <ligand>
        <name>DNA</name>
        <dbReference type="ChEBI" id="CHEBI:16991"/>
    </ligand>
</feature>
<feature type="binding site" evidence="1">
    <location>
        <position position="319"/>
    </location>
    <ligand>
        <name>DNA</name>
        <dbReference type="ChEBI" id="CHEBI:16991"/>
    </ligand>
</feature>
<feature type="binding site" evidence="1">
    <location>
        <position position="324"/>
    </location>
    <ligand>
        <name>DNA</name>
        <dbReference type="ChEBI" id="CHEBI:16991"/>
    </ligand>
</feature>
<dbReference type="EC" id="3.6.4.-" evidence="1"/>
<dbReference type="EMBL" id="CP000572">
    <property type="protein sequence ID" value="ABN91851.1"/>
    <property type="molecule type" value="Genomic_DNA"/>
</dbReference>
<dbReference type="RefSeq" id="WP_004194268.1">
    <property type="nucleotide sequence ID" value="NC_009076.1"/>
</dbReference>
<dbReference type="SMR" id="A3NZ67"/>
<dbReference type="GeneID" id="93061494"/>
<dbReference type="KEGG" id="bpl:BURPS1106A_3401"/>
<dbReference type="HOGENOM" id="CLU_055599_1_0_4"/>
<dbReference type="Proteomes" id="UP000006738">
    <property type="component" value="Chromosome I"/>
</dbReference>
<dbReference type="GO" id="GO:0005737">
    <property type="term" value="C:cytoplasm"/>
    <property type="evidence" value="ECO:0007669"/>
    <property type="project" value="UniProtKB-SubCell"/>
</dbReference>
<dbReference type="GO" id="GO:0048476">
    <property type="term" value="C:Holliday junction resolvase complex"/>
    <property type="evidence" value="ECO:0007669"/>
    <property type="project" value="UniProtKB-UniRule"/>
</dbReference>
<dbReference type="GO" id="GO:0005524">
    <property type="term" value="F:ATP binding"/>
    <property type="evidence" value="ECO:0007669"/>
    <property type="project" value="UniProtKB-UniRule"/>
</dbReference>
<dbReference type="GO" id="GO:0016887">
    <property type="term" value="F:ATP hydrolysis activity"/>
    <property type="evidence" value="ECO:0007669"/>
    <property type="project" value="InterPro"/>
</dbReference>
<dbReference type="GO" id="GO:0000400">
    <property type="term" value="F:four-way junction DNA binding"/>
    <property type="evidence" value="ECO:0007669"/>
    <property type="project" value="UniProtKB-UniRule"/>
</dbReference>
<dbReference type="GO" id="GO:0009378">
    <property type="term" value="F:four-way junction helicase activity"/>
    <property type="evidence" value="ECO:0007669"/>
    <property type="project" value="InterPro"/>
</dbReference>
<dbReference type="GO" id="GO:0006310">
    <property type="term" value="P:DNA recombination"/>
    <property type="evidence" value="ECO:0007669"/>
    <property type="project" value="UniProtKB-UniRule"/>
</dbReference>
<dbReference type="GO" id="GO:0006281">
    <property type="term" value="P:DNA repair"/>
    <property type="evidence" value="ECO:0007669"/>
    <property type="project" value="UniProtKB-UniRule"/>
</dbReference>
<dbReference type="CDD" id="cd00009">
    <property type="entry name" value="AAA"/>
    <property type="match status" value="1"/>
</dbReference>
<dbReference type="FunFam" id="1.10.10.10:FF:000086">
    <property type="entry name" value="Holliday junction ATP-dependent DNA helicase RuvB"/>
    <property type="match status" value="1"/>
</dbReference>
<dbReference type="FunFam" id="3.40.50.300:FF:000073">
    <property type="entry name" value="Holliday junction ATP-dependent DNA helicase RuvB"/>
    <property type="match status" value="1"/>
</dbReference>
<dbReference type="Gene3D" id="1.10.8.60">
    <property type="match status" value="1"/>
</dbReference>
<dbReference type="Gene3D" id="3.40.50.300">
    <property type="entry name" value="P-loop containing nucleotide triphosphate hydrolases"/>
    <property type="match status" value="1"/>
</dbReference>
<dbReference type="Gene3D" id="1.10.10.10">
    <property type="entry name" value="Winged helix-like DNA-binding domain superfamily/Winged helix DNA-binding domain"/>
    <property type="match status" value="1"/>
</dbReference>
<dbReference type="HAMAP" id="MF_00016">
    <property type="entry name" value="DNA_HJ_migration_RuvB"/>
    <property type="match status" value="1"/>
</dbReference>
<dbReference type="InterPro" id="IPR003593">
    <property type="entry name" value="AAA+_ATPase"/>
</dbReference>
<dbReference type="InterPro" id="IPR041445">
    <property type="entry name" value="AAA_lid_4"/>
</dbReference>
<dbReference type="InterPro" id="IPR004605">
    <property type="entry name" value="DNA_helicase_Holl-junc_RuvB"/>
</dbReference>
<dbReference type="InterPro" id="IPR027417">
    <property type="entry name" value="P-loop_NTPase"/>
</dbReference>
<dbReference type="InterPro" id="IPR008824">
    <property type="entry name" value="RuvB-like_N"/>
</dbReference>
<dbReference type="InterPro" id="IPR008823">
    <property type="entry name" value="RuvB_C"/>
</dbReference>
<dbReference type="InterPro" id="IPR036388">
    <property type="entry name" value="WH-like_DNA-bd_sf"/>
</dbReference>
<dbReference type="InterPro" id="IPR036390">
    <property type="entry name" value="WH_DNA-bd_sf"/>
</dbReference>
<dbReference type="NCBIfam" id="NF000868">
    <property type="entry name" value="PRK00080.1"/>
    <property type="match status" value="1"/>
</dbReference>
<dbReference type="NCBIfam" id="TIGR00635">
    <property type="entry name" value="ruvB"/>
    <property type="match status" value="1"/>
</dbReference>
<dbReference type="PANTHER" id="PTHR42848">
    <property type="match status" value="1"/>
</dbReference>
<dbReference type="PANTHER" id="PTHR42848:SF1">
    <property type="entry name" value="HOLLIDAY JUNCTION BRANCH MIGRATION COMPLEX SUBUNIT RUVB"/>
    <property type="match status" value="1"/>
</dbReference>
<dbReference type="Pfam" id="PF17864">
    <property type="entry name" value="AAA_lid_4"/>
    <property type="match status" value="1"/>
</dbReference>
<dbReference type="Pfam" id="PF05491">
    <property type="entry name" value="RuvB_C"/>
    <property type="match status" value="1"/>
</dbReference>
<dbReference type="Pfam" id="PF05496">
    <property type="entry name" value="RuvB_N"/>
    <property type="match status" value="1"/>
</dbReference>
<dbReference type="SMART" id="SM00382">
    <property type="entry name" value="AAA"/>
    <property type="match status" value="1"/>
</dbReference>
<dbReference type="SUPFAM" id="SSF52540">
    <property type="entry name" value="P-loop containing nucleoside triphosphate hydrolases"/>
    <property type="match status" value="1"/>
</dbReference>
<dbReference type="SUPFAM" id="SSF46785">
    <property type="entry name" value="Winged helix' DNA-binding domain"/>
    <property type="match status" value="1"/>
</dbReference>
<name>RUVB_BURP0</name>
<organism>
    <name type="scientific">Burkholderia pseudomallei (strain 1106a)</name>
    <dbReference type="NCBI Taxonomy" id="357348"/>
    <lineage>
        <taxon>Bacteria</taxon>
        <taxon>Pseudomonadati</taxon>
        <taxon>Pseudomonadota</taxon>
        <taxon>Betaproteobacteria</taxon>
        <taxon>Burkholderiales</taxon>
        <taxon>Burkholderiaceae</taxon>
        <taxon>Burkholderia</taxon>
        <taxon>pseudomallei group</taxon>
    </lineage>
</organism>
<keyword id="KW-0067">ATP-binding</keyword>
<keyword id="KW-0963">Cytoplasm</keyword>
<keyword id="KW-0227">DNA damage</keyword>
<keyword id="KW-0233">DNA recombination</keyword>
<keyword id="KW-0234">DNA repair</keyword>
<keyword id="KW-0238">DNA-binding</keyword>
<keyword id="KW-0378">Hydrolase</keyword>
<keyword id="KW-0547">Nucleotide-binding</keyword>
<proteinExistence type="inferred from homology"/>